<accession>F1RE08</accession>
<accession>A1XBQ5</accession>
<accession>A9LLA5</accession>
<comment type="function">
    <text evidence="6">Catalyzes the isomerization of prostaglandin H2 to prostacyclin (= prostaglandin I2).</text>
</comment>
<comment type="function">
    <text evidence="1 6">Catalyzes the biosynthesis and metabolism of eicosanoids. Catalyzes the isomerization of prostaglandin H2 to prostacyclin (= prostaglandin I2), a potent mediator of vasodilation and inhibitor of platelet aggregation (PubMed:18032380). Additionally, displays dehydratase activity, toward hydroperoxyeicosatetraenoates (HPETEs), especially toward (15S)-hydroperoxy-(5Z,8Z,11Z,13E)-eicosatetraenoate (15(S)-HPETE) (By similarity).</text>
</comment>
<comment type="catalytic activity">
    <reaction evidence="6">
        <text>prostaglandin H2 = prostaglandin I2</text>
        <dbReference type="Rhea" id="RHEA:23580"/>
        <dbReference type="ChEBI" id="CHEBI:57403"/>
        <dbReference type="ChEBI" id="CHEBI:57405"/>
        <dbReference type="EC" id="5.3.99.4"/>
    </reaction>
    <physiologicalReaction direction="left-to-right" evidence="9">
        <dbReference type="Rhea" id="RHEA:23581"/>
    </physiologicalReaction>
</comment>
<comment type="catalytic activity">
    <reaction evidence="1">
        <text>a hydroperoxyeicosatetraenoate = an oxoeicosatetraenoate + H2O</text>
        <dbReference type="Rhea" id="RHEA:55556"/>
        <dbReference type="ChEBI" id="CHEBI:15377"/>
        <dbReference type="ChEBI" id="CHEBI:59720"/>
        <dbReference type="ChEBI" id="CHEBI:131859"/>
        <dbReference type="EC" id="4.2.1.152"/>
    </reaction>
    <physiologicalReaction direction="left-to-right" evidence="1">
        <dbReference type="Rhea" id="RHEA:55557"/>
    </physiologicalReaction>
</comment>
<comment type="catalytic activity">
    <reaction evidence="1">
        <text>(15S)-hydroperoxy-(5Z,8Z,11Z,13E)-eicosatetraenoate = 15-oxo-(5Z,8Z,11Z,13E)-eicosatetraenoate + H2O</text>
        <dbReference type="Rhea" id="RHEA:48636"/>
        <dbReference type="ChEBI" id="CHEBI:15377"/>
        <dbReference type="ChEBI" id="CHEBI:57410"/>
        <dbReference type="ChEBI" id="CHEBI:57446"/>
    </reaction>
</comment>
<comment type="catalytic activity">
    <reaction evidence="1">
        <text>(15S)-hydroperoxy-(5Z,8Z,11Z,13E)-eicosatetraenoate + AH2 = (15S)-hydroxy-(5Z,8Z,11Z,13E)-eicosatetraenoate + A + H2O</text>
        <dbReference type="Rhea" id="RHEA:48856"/>
        <dbReference type="ChEBI" id="CHEBI:13193"/>
        <dbReference type="ChEBI" id="CHEBI:15377"/>
        <dbReference type="ChEBI" id="CHEBI:17499"/>
        <dbReference type="ChEBI" id="CHEBI:57409"/>
        <dbReference type="ChEBI" id="CHEBI:57446"/>
    </reaction>
</comment>
<comment type="cofactor">
    <cofactor evidence="4 5 6">
        <name>heme</name>
        <dbReference type="ChEBI" id="CHEBI:30413"/>
    </cofactor>
</comment>
<comment type="biophysicochemical properties">
    <kinetics>
        <KM evidence="6">25 uM for prostaglandin H2 (at 23 degrees Celsius)</KM>
        <Vmax evidence="6">1100.0 mol/min/mol enzyme (at 23 degrees Celsius)</Vmax>
    </kinetics>
</comment>
<comment type="subcellular location">
    <subcellularLocation>
        <location evidence="2 4">Endoplasmic reticulum membrane</location>
        <topology evidence="3">Single-pass membrane protein</topology>
    </subcellularLocation>
</comment>
<comment type="similarity">
    <text evidence="4 8">Belongs to the cytochrome P450 family.</text>
</comment>
<organism evidence="11">
    <name type="scientific">Danio rerio</name>
    <name type="common">Zebrafish</name>
    <name type="synonym">Brachydanio rerio</name>
    <dbReference type="NCBI Taxonomy" id="7955"/>
    <lineage>
        <taxon>Eukaryota</taxon>
        <taxon>Metazoa</taxon>
        <taxon>Chordata</taxon>
        <taxon>Craniata</taxon>
        <taxon>Vertebrata</taxon>
        <taxon>Euteleostomi</taxon>
        <taxon>Actinopterygii</taxon>
        <taxon>Neopterygii</taxon>
        <taxon>Teleostei</taxon>
        <taxon>Ostariophysi</taxon>
        <taxon>Cypriniformes</taxon>
        <taxon>Danionidae</taxon>
        <taxon>Danioninae</taxon>
        <taxon>Danio</taxon>
    </lineage>
</organism>
<dbReference type="EC" id="5.3.99.4" evidence="6"/>
<dbReference type="EC" id="4.2.1.152" evidence="1"/>
<dbReference type="EMBL" id="EU236593">
    <property type="protein sequence ID" value="ABX51998.1"/>
    <property type="molecule type" value="mRNA"/>
</dbReference>
<dbReference type="EMBL" id="DQ324855">
    <property type="protein sequence ID" value="ABC59225.1"/>
    <property type="molecule type" value="mRNA"/>
</dbReference>
<dbReference type="EMBL" id="BX546446">
    <property type="status" value="NOT_ANNOTATED_CDS"/>
    <property type="molecule type" value="Genomic_DNA"/>
</dbReference>
<dbReference type="RefSeq" id="NP_001104630.1">
    <property type="nucleotide sequence ID" value="NM_001111160.1"/>
</dbReference>
<dbReference type="PDB" id="3B98">
    <property type="method" value="X-ray"/>
    <property type="resolution" value="2.08 A"/>
    <property type="chains" value="A/B=17-480"/>
</dbReference>
<dbReference type="PDB" id="3B99">
    <property type="method" value="X-ray"/>
    <property type="resolution" value="2.50 A"/>
    <property type="chains" value="A/B=17-480"/>
</dbReference>
<dbReference type="PDBsum" id="3B98"/>
<dbReference type="PDBsum" id="3B99"/>
<dbReference type="SMR" id="F1RE08"/>
<dbReference type="FunCoup" id="F1RE08">
    <property type="interactions" value="40"/>
</dbReference>
<dbReference type="STRING" id="7955.ENSDARP00000078769"/>
<dbReference type="PaxDb" id="7955-ENSDARP00000078769"/>
<dbReference type="Ensembl" id="ENSDART00000084334">
    <property type="protein sequence ID" value="ENSDARP00000078769"/>
    <property type="gene ID" value="ENSDARG00000060094"/>
</dbReference>
<dbReference type="Ensembl" id="ENSDART00000180836">
    <property type="protein sequence ID" value="ENSDARP00000156731"/>
    <property type="gene ID" value="ENSDARG00000113227"/>
</dbReference>
<dbReference type="GeneID" id="559148"/>
<dbReference type="KEGG" id="dre:559148"/>
<dbReference type="AGR" id="ZFIN:ZDB-GENE-070116-1"/>
<dbReference type="CTD" id="5740"/>
<dbReference type="ZFIN" id="ZDB-GENE-070116-1">
    <property type="gene designation" value="ptgis"/>
</dbReference>
<dbReference type="eggNOG" id="KOG0684">
    <property type="taxonomic scope" value="Eukaryota"/>
</dbReference>
<dbReference type="HOGENOM" id="CLU_018012_1_3_1"/>
<dbReference type="InParanoid" id="F1RE08"/>
<dbReference type="OMA" id="ARMKDKH"/>
<dbReference type="OrthoDB" id="6692864at2759"/>
<dbReference type="PhylomeDB" id="F1RE08"/>
<dbReference type="TreeFam" id="TF105090"/>
<dbReference type="Reactome" id="R-DRE-197264">
    <property type="pathway name" value="Nicotinamide salvaging"/>
</dbReference>
<dbReference type="Reactome" id="R-DRE-211979">
    <property type="pathway name" value="Eicosanoids"/>
</dbReference>
<dbReference type="Reactome" id="R-DRE-2162123">
    <property type="pathway name" value="Synthesis of Prostaglandins (PG) and Thromboxanes (TX)"/>
</dbReference>
<dbReference type="EvolutionaryTrace" id="F1RE08"/>
<dbReference type="PRO" id="PR:F1RE08"/>
<dbReference type="Proteomes" id="UP000000437">
    <property type="component" value="Alternate scaffold 6"/>
</dbReference>
<dbReference type="Proteomes" id="UP000000437">
    <property type="component" value="Chromosome 6"/>
</dbReference>
<dbReference type="Bgee" id="ENSDARG00000060094">
    <property type="expression patterns" value="Expressed in pharyngeal gill and 15 other cell types or tissues"/>
</dbReference>
<dbReference type="GO" id="GO:0005789">
    <property type="term" value="C:endoplasmic reticulum membrane"/>
    <property type="evidence" value="ECO:0000250"/>
    <property type="project" value="UniProtKB"/>
</dbReference>
<dbReference type="GO" id="GO:0020037">
    <property type="term" value="F:heme binding"/>
    <property type="evidence" value="ECO:0000314"/>
    <property type="project" value="UniProtKB"/>
</dbReference>
<dbReference type="GO" id="GO:0106256">
    <property type="term" value="F:hydroperoxy icosatetraenoate dehydratase activity"/>
    <property type="evidence" value="ECO:0007669"/>
    <property type="project" value="UniProtKB-EC"/>
</dbReference>
<dbReference type="GO" id="GO:0005506">
    <property type="term" value="F:iron ion binding"/>
    <property type="evidence" value="ECO:0007669"/>
    <property type="project" value="InterPro"/>
</dbReference>
<dbReference type="GO" id="GO:0004497">
    <property type="term" value="F:monooxygenase activity"/>
    <property type="evidence" value="ECO:0007669"/>
    <property type="project" value="InterPro"/>
</dbReference>
<dbReference type="GO" id="GO:0016705">
    <property type="term" value="F:oxidoreductase activity, acting on paired donors, with incorporation or reduction of molecular oxygen"/>
    <property type="evidence" value="ECO:0007669"/>
    <property type="project" value="InterPro"/>
</dbReference>
<dbReference type="GO" id="GO:0008116">
    <property type="term" value="F:prostaglandin-I synthase activity"/>
    <property type="evidence" value="ECO:0000314"/>
    <property type="project" value="UniProtKB"/>
</dbReference>
<dbReference type="GO" id="GO:0001516">
    <property type="term" value="P:prostaglandin biosynthetic process"/>
    <property type="evidence" value="ECO:0000314"/>
    <property type="project" value="UniProtKB"/>
</dbReference>
<dbReference type="CDD" id="cd20634">
    <property type="entry name" value="PGIS_CYP8A1"/>
    <property type="match status" value="1"/>
</dbReference>
<dbReference type="DisProt" id="DP02884"/>
<dbReference type="FunFam" id="1.10.630.10:FF:000025">
    <property type="entry name" value="Prostaglandin I2 (prostacyclin) synthase"/>
    <property type="match status" value="1"/>
</dbReference>
<dbReference type="Gene3D" id="1.10.630.10">
    <property type="entry name" value="Cytochrome P450"/>
    <property type="match status" value="1"/>
</dbReference>
<dbReference type="InterPro" id="IPR001128">
    <property type="entry name" value="Cyt_P450"/>
</dbReference>
<dbReference type="InterPro" id="IPR024204">
    <property type="entry name" value="Cyt_P450_CYP7A1-type"/>
</dbReference>
<dbReference type="InterPro" id="IPR002403">
    <property type="entry name" value="Cyt_P450_E_grp-IV"/>
</dbReference>
<dbReference type="InterPro" id="IPR036396">
    <property type="entry name" value="Cyt_P450_sf"/>
</dbReference>
<dbReference type="PANTHER" id="PTHR24306">
    <property type="match status" value="1"/>
</dbReference>
<dbReference type="PANTHER" id="PTHR24306:SF4">
    <property type="entry name" value="PROSTACYCLIN SYNTHASE"/>
    <property type="match status" value="1"/>
</dbReference>
<dbReference type="Pfam" id="PF00067">
    <property type="entry name" value="p450"/>
    <property type="match status" value="1"/>
</dbReference>
<dbReference type="PIRSF" id="PIRSF000047">
    <property type="entry name" value="Cytochrome_CYPVIIA1"/>
    <property type="match status" value="1"/>
</dbReference>
<dbReference type="PRINTS" id="PR00465">
    <property type="entry name" value="EP450IV"/>
</dbReference>
<dbReference type="SUPFAM" id="SSF48264">
    <property type="entry name" value="Cytochrome P450"/>
    <property type="match status" value="1"/>
</dbReference>
<sequence length="480" mass="55308">MMWTALLLVGLSILVIVLYGRRTRRRNEPPLDKGMIPWLGHALEFGKDAAKFLTRMKEKHGDIFTVRAAGLYITVLLDSNCYDAVLSDVASLDQTSYAQVLMKRIFNMILPSHNPESEKKRAEMHFQGASLTQLSNSMQNNLRLLMTPSEMGLKTSEWKKDGLFNLCYSLLFKTGYLTVFGAENNDSAALTQIYEEFRRFDKLLPKLARTTINKEEKQIASAAREKLWKWLTPSGLDRKPREQSWLGSYVKQLQDEGIDAEMQRRAMLLQLWVTQGNAGPAAFWVMGYLLTHPEALRAVREEIQGGKHLRLEERQKNTPVFDSVLWETLRLTAAALITRDVTQDKKIRLSNGQEYHLRRGDRLCVFPFISPQMDPQIHQQPEMFQFDRFLNADRTEKKDFFKNGARVKYPSVPWGTEDNLCPGRHFAVHAIKELVFTILTRFDVELCDKNATVPLVDPSRYGFGILQPAGDLEIRYRIRF</sequence>
<gene>
    <name evidence="12" type="primary">ptgis</name>
    <name evidence="12" type="synonym">ptgisl</name>
</gene>
<feature type="chain" id="PRO_0000440095" description="Prostacyclin synthase">
    <location>
        <begin position="1"/>
        <end position="480"/>
    </location>
</feature>
<feature type="transmembrane region" description="Helical" evidence="3">
    <location>
        <begin position="1"/>
        <end position="21"/>
    </location>
</feature>
<feature type="binding site" evidence="9">
    <location>
        <position position="104"/>
    </location>
    <ligand>
        <name>substrate</name>
    </ligand>
</feature>
<feature type="binding site" evidence="9">
    <location>
        <position position="110"/>
    </location>
    <ligand>
        <name>substrate</name>
    </ligand>
</feature>
<feature type="binding site" evidence="9">
    <location>
        <position position="277"/>
    </location>
    <ligand>
        <name>substrate</name>
    </ligand>
</feature>
<feature type="binding site" evidence="9">
    <location>
        <begin position="338"/>
        <end position="339"/>
    </location>
    <ligand>
        <name>substrate</name>
    </ligand>
</feature>
<feature type="binding site" evidence="9">
    <location>
        <position position="362"/>
    </location>
    <ligand>
        <name>substrate</name>
    </ligand>
</feature>
<feature type="binding site" description="axial binding residue" evidence="5 6 13 14">
    <location>
        <position position="421"/>
    </location>
    <ligand>
        <name>heme</name>
        <dbReference type="ChEBI" id="CHEBI:30413"/>
    </ligand>
    <ligandPart>
        <name>Fe</name>
        <dbReference type="ChEBI" id="CHEBI:18248"/>
    </ligandPart>
</feature>
<feature type="sequence conflict" description="In Ref. 1; ABX51998 and 2; ABC59225." evidence="8" ref="1 2">
    <original>D</original>
    <variation>N</variation>
    <location>
        <position position="186"/>
    </location>
</feature>
<feature type="sequence conflict" description="In Ref. 1; ABX51998 and 2; ABC59225." evidence="8" ref="1 2">
    <original>I</original>
    <variation>V</variation>
    <location>
        <position position="212"/>
    </location>
</feature>
<feature type="sequence conflict" description="In Ref. 1; ABX51998." evidence="8" ref="1">
    <original>R</original>
    <variation>C</variation>
    <location>
        <position position="348"/>
    </location>
</feature>
<feature type="sequence conflict" description="In Ref. 2; ABC59225." evidence="8" ref="2">
    <original>E</original>
    <variation>D</variation>
    <location>
        <position position="473"/>
    </location>
</feature>
<feature type="turn" evidence="15">
    <location>
        <begin position="37"/>
        <end position="39"/>
    </location>
</feature>
<feature type="helix" evidence="15">
    <location>
        <begin position="42"/>
        <end position="47"/>
    </location>
</feature>
<feature type="helix" evidence="15">
    <location>
        <begin position="49"/>
        <end position="60"/>
    </location>
</feature>
<feature type="strand" evidence="15">
    <location>
        <begin position="62"/>
        <end position="68"/>
    </location>
</feature>
<feature type="strand" evidence="15">
    <location>
        <begin position="71"/>
        <end position="76"/>
    </location>
</feature>
<feature type="turn" evidence="15">
    <location>
        <begin position="79"/>
        <end position="81"/>
    </location>
</feature>
<feature type="helix" evidence="15">
    <location>
        <begin position="82"/>
        <end position="86"/>
    </location>
</feature>
<feature type="turn" evidence="15">
    <location>
        <begin position="89"/>
        <end position="91"/>
    </location>
</feature>
<feature type="strand" evidence="15">
    <location>
        <begin position="92"/>
        <end position="94"/>
    </location>
</feature>
<feature type="helix" evidence="15">
    <location>
        <begin position="95"/>
        <end position="104"/>
    </location>
</feature>
<feature type="helix" evidence="15">
    <location>
        <begin position="115"/>
        <end position="125"/>
    </location>
</feature>
<feature type="helix" evidence="15">
    <location>
        <begin position="128"/>
        <end position="145"/>
    </location>
</feature>
<feature type="turn" evidence="15">
    <location>
        <begin position="148"/>
        <end position="152"/>
    </location>
</feature>
<feature type="strand" evidence="16">
    <location>
        <begin position="154"/>
        <end position="157"/>
    </location>
</feature>
<feature type="strand" evidence="15">
    <location>
        <begin position="159"/>
        <end position="162"/>
    </location>
</feature>
<feature type="helix" evidence="15">
    <location>
        <begin position="163"/>
        <end position="180"/>
    </location>
</feature>
<feature type="helix" evidence="15">
    <location>
        <begin position="187"/>
        <end position="208"/>
    </location>
</feature>
<feature type="helix" evidence="15">
    <location>
        <begin position="214"/>
        <end position="231"/>
    </location>
</feature>
<feature type="helix" evidence="15">
    <location>
        <begin position="245"/>
        <end position="255"/>
    </location>
</feature>
<feature type="helix" evidence="15">
    <location>
        <begin position="260"/>
        <end position="275"/>
    </location>
</feature>
<feature type="helix" evidence="15">
    <location>
        <begin position="278"/>
        <end position="290"/>
    </location>
</feature>
<feature type="helix" evidence="15">
    <location>
        <begin position="293"/>
        <end position="303"/>
    </location>
</feature>
<feature type="helix" evidence="15">
    <location>
        <begin position="319"/>
        <end position="332"/>
    </location>
</feature>
<feature type="strand" evidence="15">
    <location>
        <begin position="333"/>
        <end position="335"/>
    </location>
</feature>
<feature type="strand" evidence="15">
    <location>
        <begin position="337"/>
        <end position="341"/>
    </location>
</feature>
<feature type="strand" evidence="15">
    <location>
        <begin position="345"/>
        <end position="348"/>
    </location>
</feature>
<feature type="strand" evidence="15">
    <location>
        <begin position="354"/>
        <end position="357"/>
    </location>
</feature>
<feature type="strand" evidence="15">
    <location>
        <begin position="362"/>
        <end position="365"/>
    </location>
</feature>
<feature type="helix" evidence="15">
    <location>
        <begin position="368"/>
        <end position="372"/>
    </location>
</feature>
<feature type="turn" evidence="15">
    <location>
        <begin position="375"/>
        <end position="377"/>
    </location>
</feature>
<feature type="strand" evidence="15">
    <location>
        <begin position="378"/>
        <end position="380"/>
    </location>
</feature>
<feature type="turn" evidence="15">
    <location>
        <begin position="386"/>
        <end position="389"/>
    </location>
</feature>
<feature type="strand" evidence="15">
    <location>
        <begin position="401"/>
        <end position="404"/>
    </location>
</feature>
<feature type="helix" evidence="15">
    <location>
        <begin position="424"/>
        <end position="441"/>
    </location>
</feature>
<feature type="strand" evidence="15">
    <location>
        <begin position="442"/>
        <end position="448"/>
    </location>
</feature>
<feature type="helix" evidence="15">
    <location>
        <begin position="458"/>
        <end position="460"/>
    </location>
</feature>
<feature type="strand" evidence="15">
    <location>
        <begin position="462"/>
        <end position="465"/>
    </location>
</feature>
<feature type="strand" evidence="15">
    <location>
        <begin position="468"/>
        <end position="470"/>
    </location>
</feature>
<feature type="strand" evidence="15">
    <location>
        <begin position="473"/>
        <end position="478"/>
    </location>
</feature>
<evidence type="ECO:0000250" key="1">
    <source>
        <dbReference type="UniProtKB" id="Q16647"/>
    </source>
</evidence>
<evidence type="ECO:0000250" key="2">
    <source>
        <dbReference type="UniProtKB" id="Q29626"/>
    </source>
</evidence>
<evidence type="ECO:0000255" key="3"/>
<evidence type="ECO:0000255" key="4">
    <source>
        <dbReference type="PIRNR" id="PIRNR000047"/>
    </source>
</evidence>
<evidence type="ECO:0000255" key="5">
    <source>
        <dbReference type="PIRSR" id="PIRSR000047-1"/>
    </source>
</evidence>
<evidence type="ECO:0000269" key="6">
    <source>
    </source>
</evidence>
<evidence type="ECO:0000303" key="7">
    <source>
    </source>
</evidence>
<evidence type="ECO:0000305" key="8"/>
<evidence type="ECO:0000305" key="9">
    <source>
    </source>
</evidence>
<evidence type="ECO:0000312" key="10">
    <source>
        <dbReference type="EMBL" id="ABC59225.1"/>
    </source>
</evidence>
<evidence type="ECO:0000312" key="11">
    <source>
        <dbReference type="Proteomes" id="UP000000437"/>
    </source>
</evidence>
<evidence type="ECO:0000312" key="12">
    <source>
        <dbReference type="ZFIN" id="ZDB-GENE-070116-1"/>
    </source>
</evidence>
<evidence type="ECO:0007744" key="13">
    <source>
        <dbReference type="PDB" id="3B98"/>
    </source>
</evidence>
<evidence type="ECO:0007744" key="14">
    <source>
        <dbReference type="PDB" id="3B99"/>
    </source>
</evidence>
<evidence type="ECO:0007829" key="15">
    <source>
        <dbReference type="PDB" id="3B98"/>
    </source>
</evidence>
<evidence type="ECO:0007829" key="16">
    <source>
        <dbReference type="PDB" id="3B99"/>
    </source>
</evidence>
<keyword id="KW-0002">3D-structure</keyword>
<keyword id="KW-0256">Endoplasmic reticulum</keyword>
<keyword id="KW-0275">Fatty acid biosynthesis</keyword>
<keyword id="KW-0276">Fatty acid metabolism</keyword>
<keyword id="KW-0349">Heme</keyword>
<keyword id="KW-0408">Iron</keyword>
<keyword id="KW-0413">Isomerase</keyword>
<keyword id="KW-0444">Lipid biosynthesis</keyword>
<keyword id="KW-0443">Lipid metabolism</keyword>
<keyword id="KW-0456">Lyase</keyword>
<keyword id="KW-0472">Membrane</keyword>
<keyword id="KW-0479">Metal-binding</keyword>
<keyword id="KW-0643">Prostaglandin biosynthesis</keyword>
<keyword id="KW-0644">Prostaglandin metabolism</keyword>
<keyword id="KW-1185">Reference proteome</keyword>
<keyword id="KW-0812">Transmembrane</keyword>
<keyword id="KW-1133">Transmembrane helix</keyword>
<proteinExistence type="evidence at protein level"/>
<protein>
    <recommendedName>
        <fullName evidence="7">Prostacyclin synthase</fullName>
        <ecNumber evidence="6">5.3.99.4</ecNumber>
    </recommendedName>
    <alternativeName>
        <fullName>Hydroperoxy icosatetraenoate dehydratase</fullName>
        <ecNumber evidence="1">4.2.1.152</ecNumber>
    </alternativeName>
    <alternativeName>
        <fullName evidence="7">Prostaglandin I2 synthase</fullName>
        <shortName evidence="7">PGIS</shortName>
    </alternativeName>
</protein>
<reference evidence="13 14" key="1">
    <citation type="journal article" date="2008" name="J. Biol. Chem.">
        <title>Structures of prostacyclin synthase and its complexes with substrate analog and inhibitor reveal a ligand-specific heme conformation change.</title>
        <authorList>
            <person name="Li Y.C."/>
            <person name="Chiang C.W."/>
            <person name="Yeh H.C."/>
            <person name="Hsu P.Y."/>
            <person name="Whitby F.G."/>
            <person name="Wang L.H."/>
            <person name="Chan N.L."/>
        </authorList>
    </citation>
    <scope>NUCLEOTIDE SEQUENCE [MRNA]</scope>
    <scope>X-RAY CRYSTALLOGRAPHY (2.08 ANGSTROMS) OF 17-480 IN COMPLEX WITH HEME AND SUBSTRATE ANALOG U51605</scope>
    <scope>FUNCTION</scope>
    <scope>CATALYTIC ACTIVITY</scope>
    <scope>COFACTOR</scope>
    <scope>BIOPHYSICOCHEMICAL PROPERTIES</scope>
</reference>
<reference evidence="10" key="2">
    <citation type="submission" date="2005-12" db="EMBL/GenBank/DDBJ databases">
        <title>Role of prostacyclin in vasculogenesis and a structural-mechanism for its biosynthesis.</title>
        <authorList>
            <person name="Lee D.S."/>
            <person name="Nioche P."/>
            <person name="Herzog W."/>
            <person name="Hunt R.D."/>
            <person name="Stainier D."/>
            <person name="Raman C."/>
        </authorList>
    </citation>
    <scope>NUCLEOTIDE SEQUENCE [MRNA]</scope>
</reference>
<reference evidence="11" key="3">
    <citation type="journal article" date="2013" name="Nature">
        <title>The zebrafish reference genome sequence and its relationship to the human genome.</title>
        <authorList>
            <person name="Howe K."/>
            <person name="Clark M.D."/>
            <person name="Torroja C.F."/>
            <person name="Torrance J."/>
            <person name="Berthelot C."/>
            <person name="Muffato M."/>
            <person name="Collins J.E."/>
            <person name="Humphray S."/>
            <person name="McLaren K."/>
            <person name="Matthews L."/>
            <person name="McLaren S."/>
            <person name="Sealy I."/>
            <person name="Caccamo M."/>
            <person name="Churcher C."/>
            <person name="Scott C."/>
            <person name="Barrett J.C."/>
            <person name="Koch R."/>
            <person name="Rauch G.J."/>
            <person name="White S."/>
            <person name="Chow W."/>
            <person name="Kilian B."/>
            <person name="Quintais L.T."/>
            <person name="Guerra-Assuncao J.A."/>
            <person name="Zhou Y."/>
            <person name="Gu Y."/>
            <person name="Yen J."/>
            <person name="Vogel J.H."/>
            <person name="Eyre T."/>
            <person name="Redmond S."/>
            <person name="Banerjee R."/>
            <person name="Chi J."/>
            <person name="Fu B."/>
            <person name="Langley E."/>
            <person name="Maguire S.F."/>
            <person name="Laird G.K."/>
            <person name="Lloyd D."/>
            <person name="Kenyon E."/>
            <person name="Donaldson S."/>
            <person name="Sehra H."/>
            <person name="Almeida-King J."/>
            <person name="Loveland J."/>
            <person name="Trevanion S."/>
            <person name="Jones M."/>
            <person name="Quail M."/>
            <person name="Willey D."/>
            <person name="Hunt A."/>
            <person name="Burton J."/>
            <person name="Sims S."/>
            <person name="McLay K."/>
            <person name="Plumb B."/>
            <person name="Davis J."/>
            <person name="Clee C."/>
            <person name="Oliver K."/>
            <person name="Clark R."/>
            <person name="Riddle C."/>
            <person name="Elliot D."/>
            <person name="Threadgold G."/>
            <person name="Harden G."/>
            <person name="Ware D."/>
            <person name="Begum S."/>
            <person name="Mortimore B."/>
            <person name="Kerry G."/>
            <person name="Heath P."/>
            <person name="Phillimore B."/>
            <person name="Tracey A."/>
            <person name="Corby N."/>
            <person name="Dunn M."/>
            <person name="Johnson C."/>
            <person name="Wood J."/>
            <person name="Clark S."/>
            <person name="Pelan S."/>
            <person name="Griffiths G."/>
            <person name="Smith M."/>
            <person name="Glithero R."/>
            <person name="Howden P."/>
            <person name="Barker N."/>
            <person name="Lloyd C."/>
            <person name="Stevens C."/>
            <person name="Harley J."/>
            <person name="Holt K."/>
            <person name="Panagiotidis G."/>
            <person name="Lovell J."/>
            <person name="Beasley H."/>
            <person name="Henderson C."/>
            <person name="Gordon D."/>
            <person name="Auger K."/>
            <person name="Wright D."/>
            <person name="Collins J."/>
            <person name="Raisen C."/>
            <person name="Dyer L."/>
            <person name="Leung K."/>
            <person name="Robertson L."/>
            <person name="Ambridge K."/>
            <person name="Leongamornlert D."/>
            <person name="McGuire S."/>
            <person name="Gilderthorp R."/>
            <person name="Griffiths C."/>
            <person name="Manthravadi D."/>
            <person name="Nichol S."/>
            <person name="Barker G."/>
            <person name="Whitehead S."/>
            <person name="Kay M."/>
            <person name="Brown J."/>
            <person name="Murnane C."/>
            <person name="Gray E."/>
            <person name="Humphries M."/>
            <person name="Sycamore N."/>
            <person name="Barker D."/>
            <person name="Saunders D."/>
            <person name="Wallis J."/>
            <person name="Babbage A."/>
            <person name="Hammond S."/>
            <person name="Mashreghi-Mohammadi M."/>
            <person name="Barr L."/>
            <person name="Martin S."/>
            <person name="Wray P."/>
            <person name="Ellington A."/>
            <person name="Matthews N."/>
            <person name="Ellwood M."/>
            <person name="Woodmansey R."/>
            <person name="Clark G."/>
            <person name="Cooper J."/>
            <person name="Tromans A."/>
            <person name="Grafham D."/>
            <person name="Skuce C."/>
            <person name="Pandian R."/>
            <person name="Andrews R."/>
            <person name="Harrison E."/>
            <person name="Kimberley A."/>
            <person name="Garnett J."/>
            <person name="Fosker N."/>
            <person name="Hall R."/>
            <person name="Garner P."/>
            <person name="Kelly D."/>
            <person name="Bird C."/>
            <person name="Palmer S."/>
            <person name="Gehring I."/>
            <person name="Berger A."/>
            <person name="Dooley C.M."/>
            <person name="Ersan-Urun Z."/>
            <person name="Eser C."/>
            <person name="Geiger H."/>
            <person name="Geisler M."/>
            <person name="Karotki L."/>
            <person name="Kirn A."/>
            <person name="Konantz J."/>
            <person name="Konantz M."/>
            <person name="Oberlander M."/>
            <person name="Rudolph-Geiger S."/>
            <person name="Teucke M."/>
            <person name="Lanz C."/>
            <person name="Raddatz G."/>
            <person name="Osoegawa K."/>
            <person name="Zhu B."/>
            <person name="Rapp A."/>
            <person name="Widaa S."/>
            <person name="Langford C."/>
            <person name="Yang F."/>
            <person name="Schuster S.C."/>
            <person name="Carter N.P."/>
            <person name="Harrow J."/>
            <person name="Ning Z."/>
            <person name="Herrero J."/>
            <person name="Searle S.M."/>
            <person name="Enright A."/>
            <person name="Geisler R."/>
            <person name="Plasterk R.H."/>
            <person name="Lee C."/>
            <person name="Westerfield M."/>
            <person name="de Jong P.J."/>
            <person name="Zon L.I."/>
            <person name="Postlethwait J.H."/>
            <person name="Nusslein-Volhard C."/>
            <person name="Hubbard T.J."/>
            <person name="Roest Crollius H."/>
            <person name="Rogers J."/>
            <person name="Stemple D.L."/>
        </authorList>
    </citation>
    <scope>NUCLEOTIDE SEQUENCE [LARGE SCALE GENOMIC DNA]</scope>
    <source>
        <strain>Tuebingen</strain>
    </source>
</reference>
<name>PTGIS_DANRE</name>